<comment type="function">
    <text evidence="1">Plays a nutritional role via nitrogen acquisition in the environment (By similarity). Contributes to the central nervous system invasion by enhancing yeast sequestration within microcapillary beds (such as within the brain) during hematogenous spread, thereby facilitating blood-to-brain invasion by C.neoformans (By similarity). Affects fitness within the mammalian phagosome, promoting non-lytic exocytosis while delaying intracellular replication and thus reducing phagolysosomal membrane damage, events that could facilitate cryptococcal dissemination when transported inside macrophages (By similarity). Urease activity is also associated with the regulation of key intracellular metabolic pathways, including melanin biosynthesis, polyamine biosynthesis, as well as intracellular levels of proline and reactive oxygen species (By similarity).</text>
</comment>
<comment type="catalytic activity">
    <reaction evidence="4">
        <text>urea + 2 H2O + H(+) = hydrogencarbonate + 2 NH4(+)</text>
        <dbReference type="Rhea" id="RHEA:20557"/>
        <dbReference type="ChEBI" id="CHEBI:15377"/>
        <dbReference type="ChEBI" id="CHEBI:15378"/>
        <dbReference type="ChEBI" id="CHEBI:16199"/>
        <dbReference type="ChEBI" id="CHEBI:17544"/>
        <dbReference type="ChEBI" id="CHEBI:28938"/>
        <dbReference type="EC" id="3.5.1.5"/>
    </reaction>
    <physiologicalReaction direction="left-to-right" evidence="1">
        <dbReference type="Rhea" id="RHEA:20558"/>
    </physiologicalReaction>
</comment>
<comment type="cofactor">
    <cofactor evidence="4">
        <name>Ni(2+)</name>
        <dbReference type="ChEBI" id="CHEBI:49786"/>
    </cofactor>
    <text evidence="4">Binds 2 Ni(2+) ions per subunit.</text>
</comment>
<comment type="activity regulation">
    <text evidence="1">The urease accessory proteins URE4, URE6 and URE7 are required for urease activity, URE7 supplying nickel for the functional urease.</text>
</comment>
<comment type="pathway">
    <text evidence="1">Nitrogen metabolism; urea degradation; CO(2) and NH(3) from urea (urease route): step 1/1.</text>
</comment>
<comment type="subunit">
    <text evidence="2">Homohexamer.</text>
</comment>
<comment type="PTM">
    <text evidence="2">Carboxylation allows a single lysine to coordinate two nickel ions.</text>
</comment>
<comment type="similarity">
    <text evidence="4">In the C-terminal section; belongs to the metallo-dependent hydrolases superfamily. Urease alpha subunit family.</text>
</comment>
<gene>
    <name type="ordered locus">CNBL1900</name>
</gene>
<organism>
    <name type="scientific">Cryptococcus neoformans var. neoformans serotype D (strain B-3501A)</name>
    <name type="common">Filobasidiella neoformans</name>
    <dbReference type="NCBI Taxonomy" id="283643"/>
    <lineage>
        <taxon>Eukaryota</taxon>
        <taxon>Fungi</taxon>
        <taxon>Dikarya</taxon>
        <taxon>Basidiomycota</taxon>
        <taxon>Agaricomycotina</taxon>
        <taxon>Tremellomycetes</taxon>
        <taxon>Tremellales</taxon>
        <taxon>Cryptococcaceae</taxon>
        <taxon>Cryptococcus</taxon>
        <taxon>Cryptococcus neoformans species complex</taxon>
    </lineage>
</organism>
<reference key="1">
    <citation type="journal article" date="2005" name="Science">
        <title>The genome of the basidiomycetous yeast and human pathogen Cryptococcus neoformans.</title>
        <authorList>
            <person name="Loftus B.J."/>
            <person name="Fung E."/>
            <person name="Roncaglia P."/>
            <person name="Rowley D."/>
            <person name="Amedeo P."/>
            <person name="Bruno D."/>
            <person name="Vamathevan J."/>
            <person name="Miranda M."/>
            <person name="Anderson I.J."/>
            <person name="Fraser J.A."/>
            <person name="Allen J.E."/>
            <person name="Bosdet I.E."/>
            <person name="Brent M.R."/>
            <person name="Chiu R."/>
            <person name="Doering T.L."/>
            <person name="Donlin M.J."/>
            <person name="D'Souza C.A."/>
            <person name="Fox D.S."/>
            <person name="Grinberg V."/>
            <person name="Fu J."/>
            <person name="Fukushima M."/>
            <person name="Haas B.J."/>
            <person name="Huang J.C."/>
            <person name="Janbon G."/>
            <person name="Jones S.J.M."/>
            <person name="Koo H.L."/>
            <person name="Krzywinski M.I."/>
            <person name="Kwon-Chung K.J."/>
            <person name="Lengeler K.B."/>
            <person name="Maiti R."/>
            <person name="Marra M.A."/>
            <person name="Marra R.E."/>
            <person name="Mathewson C.A."/>
            <person name="Mitchell T.G."/>
            <person name="Pertea M."/>
            <person name="Riggs F.R."/>
            <person name="Salzberg S.L."/>
            <person name="Schein J.E."/>
            <person name="Shvartsbeyn A."/>
            <person name="Shin H."/>
            <person name="Shumway M."/>
            <person name="Specht C.A."/>
            <person name="Suh B.B."/>
            <person name="Tenney A."/>
            <person name="Utterback T.R."/>
            <person name="Wickes B.L."/>
            <person name="Wortman J.R."/>
            <person name="Wye N.H."/>
            <person name="Kronstad J.W."/>
            <person name="Lodge J.K."/>
            <person name="Heitman J."/>
            <person name="Davis R.W."/>
            <person name="Fraser C.M."/>
            <person name="Hyman R.W."/>
        </authorList>
    </citation>
    <scope>NUCLEOTIDE SEQUENCE [LARGE SCALE GENOMIC DNA]</scope>
    <source>
        <strain>B-3501A</strain>
    </source>
</reference>
<dbReference type="EC" id="3.5.1.5" evidence="4"/>
<dbReference type="EMBL" id="AAEY01000057">
    <property type="protein sequence ID" value="EAL17675.1"/>
    <property type="molecule type" value="Genomic_DNA"/>
</dbReference>
<dbReference type="RefSeq" id="XP_772322.1">
    <property type="nucleotide sequence ID" value="XM_767229.1"/>
</dbReference>
<dbReference type="SMR" id="P0CS23"/>
<dbReference type="EnsemblFungi" id="AAW45058">
    <property type="protein sequence ID" value="AAW45058"/>
    <property type="gene ID" value="CNH01900"/>
</dbReference>
<dbReference type="GeneID" id="4939239"/>
<dbReference type="KEGG" id="cnb:CNBL1900"/>
<dbReference type="VEuPathDB" id="FungiDB:CNBL1900"/>
<dbReference type="HOGENOM" id="CLU_000980_0_0_1"/>
<dbReference type="OrthoDB" id="2638at5206"/>
<dbReference type="UniPathway" id="UPA00258">
    <property type="reaction ID" value="UER00370"/>
</dbReference>
<dbReference type="GO" id="GO:0035550">
    <property type="term" value="C:urease complex"/>
    <property type="evidence" value="ECO:0007669"/>
    <property type="project" value="InterPro"/>
</dbReference>
<dbReference type="GO" id="GO:0016151">
    <property type="term" value="F:nickel cation binding"/>
    <property type="evidence" value="ECO:0007669"/>
    <property type="project" value="InterPro"/>
</dbReference>
<dbReference type="GO" id="GO:0009039">
    <property type="term" value="F:urease activity"/>
    <property type="evidence" value="ECO:0007669"/>
    <property type="project" value="UniProtKB-EC"/>
</dbReference>
<dbReference type="GO" id="GO:0043419">
    <property type="term" value="P:urea catabolic process"/>
    <property type="evidence" value="ECO:0007669"/>
    <property type="project" value="UniProtKB-UniPathway"/>
</dbReference>
<dbReference type="CDD" id="cd00375">
    <property type="entry name" value="Urease_alpha"/>
    <property type="match status" value="1"/>
</dbReference>
<dbReference type="CDD" id="cd00407">
    <property type="entry name" value="Urease_beta"/>
    <property type="match status" value="1"/>
</dbReference>
<dbReference type="CDD" id="cd00390">
    <property type="entry name" value="Urease_gamma"/>
    <property type="match status" value="1"/>
</dbReference>
<dbReference type="FunFam" id="3.30.280.10:FF:000001">
    <property type="entry name" value="Urease subunit alpha"/>
    <property type="match status" value="1"/>
</dbReference>
<dbReference type="Gene3D" id="3.20.20.140">
    <property type="entry name" value="Metal-dependent hydrolases"/>
    <property type="match status" value="1"/>
</dbReference>
<dbReference type="Gene3D" id="2.10.150.10">
    <property type="entry name" value="Urease, beta subunit"/>
    <property type="match status" value="1"/>
</dbReference>
<dbReference type="Gene3D" id="3.30.280.10">
    <property type="entry name" value="Urease, gamma-like subunit"/>
    <property type="match status" value="1"/>
</dbReference>
<dbReference type="Gene3D" id="2.30.40.10">
    <property type="entry name" value="Urease, subunit C, domain 1"/>
    <property type="match status" value="1"/>
</dbReference>
<dbReference type="HAMAP" id="MF_01953">
    <property type="entry name" value="Urease_alpha"/>
    <property type="match status" value="1"/>
</dbReference>
<dbReference type="InterPro" id="IPR006680">
    <property type="entry name" value="Amidohydro-rel"/>
</dbReference>
<dbReference type="InterPro" id="IPR011059">
    <property type="entry name" value="Metal-dep_hydrolase_composite"/>
</dbReference>
<dbReference type="InterPro" id="IPR032466">
    <property type="entry name" value="Metal_Hydrolase"/>
</dbReference>
<dbReference type="InterPro" id="IPR008221">
    <property type="entry name" value="Urease"/>
</dbReference>
<dbReference type="InterPro" id="IPR011612">
    <property type="entry name" value="Urease_alpha_N_dom"/>
</dbReference>
<dbReference type="InterPro" id="IPR017950">
    <property type="entry name" value="Urease_AS"/>
</dbReference>
<dbReference type="InterPro" id="IPR005848">
    <property type="entry name" value="Urease_asu"/>
</dbReference>
<dbReference type="InterPro" id="IPR017951">
    <property type="entry name" value="Urease_asu_c"/>
</dbReference>
<dbReference type="InterPro" id="IPR002019">
    <property type="entry name" value="Urease_beta-like"/>
</dbReference>
<dbReference type="InterPro" id="IPR036461">
    <property type="entry name" value="Urease_betasu_sf"/>
</dbReference>
<dbReference type="InterPro" id="IPR002026">
    <property type="entry name" value="Urease_gamma/gamma-beta_su"/>
</dbReference>
<dbReference type="InterPro" id="IPR036463">
    <property type="entry name" value="Urease_gamma_sf"/>
</dbReference>
<dbReference type="InterPro" id="IPR029754">
    <property type="entry name" value="Urease_Ni-bd"/>
</dbReference>
<dbReference type="InterPro" id="IPR050069">
    <property type="entry name" value="Urease_subunit"/>
</dbReference>
<dbReference type="NCBIfam" id="NF009671">
    <property type="entry name" value="PRK13192.1"/>
    <property type="match status" value="1"/>
</dbReference>
<dbReference type="NCBIfam" id="NF009686">
    <property type="entry name" value="PRK13207.1"/>
    <property type="match status" value="1"/>
</dbReference>
<dbReference type="NCBIfam" id="TIGR01792">
    <property type="entry name" value="urease_alph"/>
    <property type="match status" value="1"/>
</dbReference>
<dbReference type="NCBIfam" id="TIGR00192">
    <property type="entry name" value="urease_beta"/>
    <property type="match status" value="1"/>
</dbReference>
<dbReference type="NCBIfam" id="TIGR00193">
    <property type="entry name" value="urease_gam"/>
    <property type="match status" value="1"/>
</dbReference>
<dbReference type="PANTHER" id="PTHR33569">
    <property type="entry name" value="UREASE"/>
    <property type="match status" value="1"/>
</dbReference>
<dbReference type="PANTHER" id="PTHR33569:SF1">
    <property type="entry name" value="UREASE"/>
    <property type="match status" value="1"/>
</dbReference>
<dbReference type="Pfam" id="PF01979">
    <property type="entry name" value="Amidohydro_1"/>
    <property type="match status" value="1"/>
</dbReference>
<dbReference type="Pfam" id="PF00449">
    <property type="entry name" value="Urease_alpha"/>
    <property type="match status" value="1"/>
</dbReference>
<dbReference type="Pfam" id="PF00699">
    <property type="entry name" value="Urease_beta"/>
    <property type="match status" value="1"/>
</dbReference>
<dbReference type="Pfam" id="PF00547">
    <property type="entry name" value="Urease_gamma"/>
    <property type="match status" value="1"/>
</dbReference>
<dbReference type="PIRSF" id="PIRSF001222">
    <property type="entry name" value="Urease"/>
    <property type="match status" value="1"/>
</dbReference>
<dbReference type="PRINTS" id="PR01752">
    <property type="entry name" value="UREASE"/>
</dbReference>
<dbReference type="SUPFAM" id="SSF51338">
    <property type="entry name" value="Composite domain of metallo-dependent hydrolases"/>
    <property type="match status" value="2"/>
</dbReference>
<dbReference type="SUPFAM" id="SSF51556">
    <property type="entry name" value="Metallo-dependent hydrolases"/>
    <property type="match status" value="1"/>
</dbReference>
<dbReference type="SUPFAM" id="SSF51278">
    <property type="entry name" value="Urease, beta-subunit"/>
    <property type="match status" value="1"/>
</dbReference>
<dbReference type="SUPFAM" id="SSF54111">
    <property type="entry name" value="Urease, gamma-subunit"/>
    <property type="match status" value="1"/>
</dbReference>
<dbReference type="PROSITE" id="PS01120">
    <property type="entry name" value="UREASE_1"/>
    <property type="match status" value="1"/>
</dbReference>
<dbReference type="PROSITE" id="PS00145">
    <property type="entry name" value="UREASE_2"/>
    <property type="match status" value="1"/>
</dbReference>
<dbReference type="PROSITE" id="PS51368">
    <property type="entry name" value="UREASE_3"/>
    <property type="match status" value="1"/>
</dbReference>
<sequence length="833" mass="90455">MHLLPRETDKLIVTTLGTLAQRRLARGLILNRAETIALISSQLQEFIRDGRHSVAELMDLGKKMLGRRHVRKGVPESIHTIQVEGTFPDGVFLVTVDDPISSDDGDLNNAFYGSFLPIPSADVFPAAPEPADTLLGALICRKEPIKINASRRRFKLEVKNAGDRPIQVGSHYHFLETNPALIFDRLLSYGYHLDIPAGTAVRFEPGEKKTVTMVEFGGKKIFHGGSGLASGSFDENLRETKVKEMVEKGGFGHKDQEKVEEGPTTEMNREVYASMFGPTTGDKIKLADMDLWIEVEKDYTVYGEECKFGGGKVLRDGGGQASGRHEHEVLDLVITNALIVDWNGIYKADIGVKNGIIVGIGKAGNPDMMDGVTDGMIVGSSTEVIAGEKLIITAGALDVHVHYICPQLMTEALASGITTVVGGGTGPADGSNATTCTSSSFYMQNMIKATDTVPLNFGFTGKGNDSGTNALRDVIEAGACGLKVHEDWGATPEVIDRALSIADEYDVQVNLHSDTLNESGYVESTLAAIKGRTIHSYHTEGAGGGHAPDIIVVCEYENVLPSSTNPTRPYAVNTLDEHLDMLMVCHHLDKSIPEDIAFADSRIRSETVAAEDVLQDTGAISMISSDCQAMGRIGEVITRTWRTAAKMKQFRGPLEGDEPTRDNNRVKRYVAKYTINPAITHGMSHLIGQVAVGCLADLVFWTAESFGARPEMILKGGVIAWAAMGDANASIPTVQPVIGRPMWGSQPEAAALNSIVWVSQASLDKDLVKRFNIKKRAEAVKNCRAIGKKDMKWNDSMPKMTVDPETYDVHADGVLCDVPPADKLPLTKRYFVY</sequence>
<feature type="chain" id="PRO_0000410324" description="Urease">
    <location>
        <begin position="1"/>
        <end position="833"/>
    </location>
</feature>
<feature type="domain" description="Urease" evidence="4">
    <location>
        <begin position="395"/>
        <end position="833"/>
    </location>
</feature>
<feature type="active site" description="Proton donor" evidence="4">
    <location>
        <position position="586"/>
    </location>
</feature>
<feature type="binding site" evidence="4">
    <location>
        <position position="400"/>
    </location>
    <ligand>
        <name>Ni(2+)</name>
        <dbReference type="ChEBI" id="CHEBI:49786"/>
        <label>1</label>
    </ligand>
</feature>
<feature type="binding site" evidence="4">
    <location>
        <position position="402"/>
    </location>
    <ligand>
        <name>Ni(2+)</name>
        <dbReference type="ChEBI" id="CHEBI:49786"/>
        <label>1</label>
    </ligand>
</feature>
<feature type="binding site" evidence="3">
    <location>
        <position position="402"/>
    </location>
    <ligand>
        <name>urea</name>
        <dbReference type="ChEBI" id="CHEBI:16199"/>
    </ligand>
</feature>
<feature type="binding site" evidence="3">
    <location>
        <position position="433"/>
    </location>
    <ligand>
        <name>urea</name>
        <dbReference type="ChEBI" id="CHEBI:16199"/>
    </ligand>
</feature>
<feature type="binding site" description="via carbamate group" evidence="4">
    <location>
        <position position="483"/>
    </location>
    <ligand>
        <name>Ni(2+)</name>
        <dbReference type="ChEBI" id="CHEBI:49786"/>
        <label>1</label>
    </ligand>
</feature>
<feature type="binding site" description="via carbamate group" evidence="4">
    <location>
        <position position="483"/>
    </location>
    <ligand>
        <name>Ni(2+)</name>
        <dbReference type="ChEBI" id="CHEBI:49786"/>
        <label>2</label>
    </ligand>
</feature>
<feature type="binding site" evidence="4">
    <location>
        <position position="485"/>
    </location>
    <ligand>
        <name>urea</name>
        <dbReference type="ChEBI" id="CHEBI:16199"/>
    </ligand>
</feature>
<feature type="binding site" evidence="4">
    <location>
        <position position="512"/>
    </location>
    <ligand>
        <name>Ni(2+)</name>
        <dbReference type="ChEBI" id="CHEBI:49786"/>
        <label>2</label>
    </ligand>
</feature>
<feature type="binding site" evidence="3">
    <location>
        <position position="512"/>
    </location>
    <ligand>
        <name>urea</name>
        <dbReference type="ChEBI" id="CHEBI:16199"/>
    </ligand>
</feature>
<feature type="binding site" evidence="4">
    <location>
        <position position="538"/>
    </location>
    <ligand>
        <name>Ni(2+)</name>
        <dbReference type="ChEBI" id="CHEBI:49786"/>
        <label>2</label>
    </ligand>
</feature>
<feature type="binding site" evidence="4">
    <location>
        <position position="626"/>
    </location>
    <ligand>
        <name>Ni(2+)</name>
        <dbReference type="ChEBI" id="CHEBI:49786"/>
        <label>1</label>
    </ligand>
</feature>
<feature type="binding site" evidence="3">
    <location>
        <position position="629"/>
    </location>
    <ligand>
        <name>urea</name>
        <dbReference type="ChEBI" id="CHEBI:16199"/>
    </ligand>
</feature>
<feature type="modified residue" description="N6-carboxylysine" evidence="2">
    <location>
        <position position="483"/>
    </location>
</feature>
<name>UREA_CRYNB</name>
<evidence type="ECO:0000250" key="1">
    <source>
        <dbReference type="UniProtKB" id="O13465"/>
    </source>
</evidence>
<evidence type="ECO:0000250" key="2">
    <source>
        <dbReference type="UniProtKB" id="P07374"/>
    </source>
</evidence>
<evidence type="ECO:0000250" key="3">
    <source>
        <dbReference type="UniProtKB" id="P41020"/>
    </source>
</evidence>
<evidence type="ECO:0000255" key="4">
    <source>
        <dbReference type="PROSITE-ProRule" id="PRU00700"/>
    </source>
</evidence>
<keyword id="KW-0378">Hydrolase</keyword>
<keyword id="KW-0479">Metal-binding</keyword>
<keyword id="KW-0533">Nickel</keyword>
<keyword id="KW-0843">Virulence</keyword>
<accession>P0CS23</accession>
<accession>Q55IZ5</accession>
<accession>Q5KCQ6</accession>
<proteinExistence type="inferred from homology"/>
<protein>
    <recommendedName>
        <fullName evidence="4">Urease</fullName>
        <ecNumber evidence="4">3.5.1.5</ecNumber>
    </recommendedName>
    <alternativeName>
        <fullName evidence="4">Urea amidohydrolase</fullName>
    </alternativeName>
</protein>